<organism>
    <name type="scientific">Arabidopsis thaliana</name>
    <name type="common">Mouse-ear cress</name>
    <dbReference type="NCBI Taxonomy" id="3702"/>
    <lineage>
        <taxon>Eukaryota</taxon>
        <taxon>Viridiplantae</taxon>
        <taxon>Streptophyta</taxon>
        <taxon>Embryophyta</taxon>
        <taxon>Tracheophyta</taxon>
        <taxon>Spermatophyta</taxon>
        <taxon>Magnoliopsida</taxon>
        <taxon>eudicotyledons</taxon>
        <taxon>Gunneridae</taxon>
        <taxon>Pentapetalae</taxon>
        <taxon>rosids</taxon>
        <taxon>malvids</taxon>
        <taxon>Brassicales</taxon>
        <taxon>Brassicaceae</taxon>
        <taxon>Camelineae</taxon>
        <taxon>Arabidopsis</taxon>
    </lineage>
</organism>
<proteinExistence type="inferred from homology"/>
<evidence type="ECO:0000250" key="1"/>
<gene>
    <name type="ordered locus">At1g51970</name>
    <name type="ORF">F5F19.3</name>
    <name type="ORF">T14L22</name>
</gene>
<name>Y1197_ARATH</name>
<reference key="1">
    <citation type="journal article" date="2000" name="Nature">
        <title>Sequence and analysis of chromosome 1 of the plant Arabidopsis thaliana.</title>
        <authorList>
            <person name="Theologis A."/>
            <person name="Ecker J.R."/>
            <person name="Palm C.J."/>
            <person name="Federspiel N.A."/>
            <person name="Kaul S."/>
            <person name="White O."/>
            <person name="Alonso J."/>
            <person name="Altafi H."/>
            <person name="Araujo R."/>
            <person name="Bowman C.L."/>
            <person name="Brooks S.Y."/>
            <person name="Buehler E."/>
            <person name="Chan A."/>
            <person name="Chao Q."/>
            <person name="Chen H."/>
            <person name="Cheuk R.F."/>
            <person name="Chin C.W."/>
            <person name="Chung M.K."/>
            <person name="Conn L."/>
            <person name="Conway A.B."/>
            <person name="Conway A.R."/>
            <person name="Creasy T.H."/>
            <person name="Dewar K."/>
            <person name="Dunn P."/>
            <person name="Etgu P."/>
            <person name="Feldblyum T.V."/>
            <person name="Feng J.-D."/>
            <person name="Fong B."/>
            <person name="Fujii C.Y."/>
            <person name="Gill J.E."/>
            <person name="Goldsmith A.D."/>
            <person name="Haas B."/>
            <person name="Hansen N.F."/>
            <person name="Hughes B."/>
            <person name="Huizar L."/>
            <person name="Hunter J.L."/>
            <person name="Jenkins J."/>
            <person name="Johnson-Hopson C."/>
            <person name="Khan S."/>
            <person name="Khaykin E."/>
            <person name="Kim C.J."/>
            <person name="Koo H.L."/>
            <person name="Kremenetskaia I."/>
            <person name="Kurtz D.B."/>
            <person name="Kwan A."/>
            <person name="Lam B."/>
            <person name="Langin-Hooper S."/>
            <person name="Lee A."/>
            <person name="Lee J.M."/>
            <person name="Lenz C.A."/>
            <person name="Li J.H."/>
            <person name="Li Y.-P."/>
            <person name="Lin X."/>
            <person name="Liu S.X."/>
            <person name="Liu Z.A."/>
            <person name="Luros J.S."/>
            <person name="Maiti R."/>
            <person name="Marziali A."/>
            <person name="Militscher J."/>
            <person name="Miranda M."/>
            <person name="Nguyen M."/>
            <person name="Nierman W.C."/>
            <person name="Osborne B.I."/>
            <person name="Pai G."/>
            <person name="Peterson J."/>
            <person name="Pham P.K."/>
            <person name="Rizzo M."/>
            <person name="Rooney T."/>
            <person name="Rowley D."/>
            <person name="Sakano H."/>
            <person name="Salzberg S.L."/>
            <person name="Schwartz J.R."/>
            <person name="Shinn P."/>
            <person name="Southwick A.M."/>
            <person name="Sun H."/>
            <person name="Tallon L.J."/>
            <person name="Tambunga G."/>
            <person name="Toriumi M.J."/>
            <person name="Town C.D."/>
            <person name="Utterback T."/>
            <person name="Van Aken S."/>
            <person name="Vaysberg M."/>
            <person name="Vysotskaia V.S."/>
            <person name="Walker M."/>
            <person name="Wu D."/>
            <person name="Yu G."/>
            <person name="Fraser C.M."/>
            <person name="Venter J.C."/>
            <person name="Davis R.W."/>
        </authorList>
    </citation>
    <scope>NUCLEOTIDE SEQUENCE [LARGE SCALE GENOMIC DNA]</scope>
    <source>
        <strain>cv. Columbia</strain>
    </source>
</reference>
<reference key="2">
    <citation type="journal article" date="2017" name="Plant J.">
        <title>Araport11: a complete reannotation of the Arabidopsis thaliana reference genome.</title>
        <authorList>
            <person name="Cheng C.Y."/>
            <person name="Krishnakumar V."/>
            <person name="Chan A.P."/>
            <person name="Thibaud-Nissen F."/>
            <person name="Schobel S."/>
            <person name="Town C.D."/>
        </authorList>
    </citation>
    <scope>GENOME REANNOTATION</scope>
    <source>
        <strain>cv. Columbia</strain>
    </source>
</reference>
<reference key="3">
    <citation type="journal article" date="2008" name="Trends Plant Sci.">
        <title>The plant B3 superfamily.</title>
        <authorList>
            <person name="Swaminathan K."/>
            <person name="Peterson K."/>
            <person name="Jack T."/>
        </authorList>
    </citation>
    <scope>GENE FAMILY</scope>
</reference>
<keyword id="KW-0238">DNA-binding</keyword>
<keyword id="KW-0539">Nucleus</keyword>
<keyword id="KW-1185">Reference proteome</keyword>
<keyword id="KW-0804">Transcription</keyword>
<keyword id="KW-0805">Transcription regulation</keyword>
<accession>Q9ZU26</accession>
<feature type="chain" id="PRO_0000412845" description="Putative B3 domain-containing protein At1g51970">
    <location>
        <begin position="1"/>
        <end position="124"/>
    </location>
</feature>
<feature type="DNA-binding region" description="TF-B3">
    <location>
        <begin position="18"/>
        <end position="124"/>
    </location>
</feature>
<protein>
    <recommendedName>
        <fullName>Putative B3 domain-containing protein At1g51970</fullName>
    </recommendedName>
</protein>
<comment type="subcellular location">
    <subcellularLocation>
        <location evidence="1">Nucleus</location>
    </subcellularLocation>
</comment>
<sequence length="124" mass="14517">MAQELDLELGLAPYDPWVLKKNLTESDLNNGFIILPKQDFEKIIRQMERGLVKNLGNGVEVKVHIIEEGPESDDYTLTLVKCRGNCMFRGGWYNMVKAKCYKPDDEIGLMWDKWSRRFLFHHIN</sequence>
<dbReference type="EMBL" id="AC006216">
    <property type="protein sequence ID" value="AAD12671.1"/>
    <property type="molecule type" value="Genomic_DNA"/>
</dbReference>
<dbReference type="EMBL" id="AC015448">
    <property type="status" value="NOT_ANNOTATED_CDS"/>
    <property type="molecule type" value="Genomic_DNA"/>
</dbReference>
<dbReference type="EMBL" id="CP002684">
    <property type="protein sequence ID" value="AEE32741.1"/>
    <property type="molecule type" value="Genomic_DNA"/>
</dbReference>
<dbReference type="PIR" id="C96559">
    <property type="entry name" value="C96559"/>
</dbReference>
<dbReference type="RefSeq" id="NP_175609.1">
    <property type="nucleotide sequence ID" value="NM_104078.2"/>
</dbReference>
<dbReference type="SMR" id="Q9ZU26"/>
<dbReference type="BioGRID" id="26851">
    <property type="interactions" value="5"/>
</dbReference>
<dbReference type="IntAct" id="Q9ZU26">
    <property type="interactions" value="5"/>
</dbReference>
<dbReference type="STRING" id="3702.Q9ZU26"/>
<dbReference type="PaxDb" id="3702-AT1G51970.1"/>
<dbReference type="EnsemblPlants" id="AT1G51970.1">
    <property type="protein sequence ID" value="AT1G51970.1"/>
    <property type="gene ID" value="AT1G51970"/>
</dbReference>
<dbReference type="GeneID" id="841626"/>
<dbReference type="Gramene" id="AT1G51970.1">
    <property type="protein sequence ID" value="AT1G51970.1"/>
    <property type="gene ID" value="AT1G51970"/>
</dbReference>
<dbReference type="KEGG" id="ath:AT1G51970"/>
<dbReference type="Araport" id="AT1G51970"/>
<dbReference type="TAIR" id="AT1G51970"/>
<dbReference type="HOGENOM" id="CLU_162241_0_0_1"/>
<dbReference type="InParanoid" id="Q9ZU26"/>
<dbReference type="OMA" id="APYDPWV"/>
<dbReference type="PhylomeDB" id="Q9ZU26"/>
<dbReference type="PRO" id="PR:Q9ZU26"/>
<dbReference type="Proteomes" id="UP000006548">
    <property type="component" value="Chromosome 1"/>
</dbReference>
<dbReference type="GO" id="GO:0005634">
    <property type="term" value="C:nucleus"/>
    <property type="evidence" value="ECO:0007669"/>
    <property type="project" value="UniProtKB-SubCell"/>
</dbReference>
<dbReference type="GO" id="GO:0003677">
    <property type="term" value="F:DNA binding"/>
    <property type="evidence" value="ECO:0007669"/>
    <property type="project" value="UniProtKB-KW"/>
</dbReference>
<dbReference type="Gene3D" id="2.40.330.10">
    <property type="entry name" value="DNA-binding pseudobarrel domain"/>
    <property type="match status" value="1"/>
</dbReference>
<dbReference type="InterPro" id="IPR051442">
    <property type="entry name" value="B3_domain"/>
</dbReference>
<dbReference type="InterPro" id="IPR015300">
    <property type="entry name" value="DNA-bd_pseudobarrel_sf"/>
</dbReference>
<dbReference type="PANTHER" id="PTHR34269:SF17">
    <property type="entry name" value="B3 DOMAIN PROTEIN"/>
    <property type="match status" value="1"/>
</dbReference>
<dbReference type="PANTHER" id="PTHR34269">
    <property type="entry name" value="TRANSCRIPTION FACTOR B3-DOMAIN FAMILY-RELATED"/>
    <property type="match status" value="1"/>
</dbReference>
<dbReference type="SUPFAM" id="SSF101936">
    <property type="entry name" value="DNA-binding pseudobarrel domain"/>
    <property type="match status" value="1"/>
</dbReference>